<name>Y1094_ARCFU</name>
<keyword id="KW-1185">Reference proteome</keyword>
<protein>
    <recommendedName>
        <fullName>Uncharacterized protein AF_1094</fullName>
    </recommendedName>
</protein>
<sequence>MKVLLDIIEDIENFIRQLEKRRGELEELKDEILIFSDAEFIDSIQRGLSDLEQGRSKVCSNLEEVKKLFEDI</sequence>
<organism>
    <name type="scientific">Archaeoglobus fulgidus (strain ATCC 49558 / DSM 4304 / JCM 9628 / NBRC 100126 / VC-16)</name>
    <dbReference type="NCBI Taxonomy" id="224325"/>
    <lineage>
        <taxon>Archaea</taxon>
        <taxon>Methanobacteriati</taxon>
        <taxon>Methanobacteriota</taxon>
        <taxon>Archaeoglobi</taxon>
        <taxon>Archaeoglobales</taxon>
        <taxon>Archaeoglobaceae</taxon>
        <taxon>Archaeoglobus</taxon>
    </lineage>
</organism>
<reference key="1">
    <citation type="journal article" date="1997" name="Nature">
        <title>The complete genome sequence of the hyperthermophilic, sulphate-reducing archaeon Archaeoglobus fulgidus.</title>
        <authorList>
            <person name="Klenk H.-P."/>
            <person name="Clayton R.A."/>
            <person name="Tomb J.-F."/>
            <person name="White O."/>
            <person name="Nelson K.E."/>
            <person name="Ketchum K.A."/>
            <person name="Dodson R.J."/>
            <person name="Gwinn M.L."/>
            <person name="Hickey E.K."/>
            <person name="Peterson J.D."/>
            <person name="Richardson D.L."/>
            <person name="Kerlavage A.R."/>
            <person name="Graham D.E."/>
            <person name="Kyrpides N.C."/>
            <person name="Fleischmann R.D."/>
            <person name="Quackenbush J."/>
            <person name="Lee N.H."/>
            <person name="Sutton G.G."/>
            <person name="Gill S.R."/>
            <person name="Kirkness E.F."/>
            <person name="Dougherty B.A."/>
            <person name="McKenney K."/>
            <person name="Adams M.D."/>
            <person name="Loftus B.J."/>
            <person name="Peterson S.N."/>
            <person name="Reich C.I."/>
            <person name="McNeil L.K."/>
            <person name="Badger J.H."/>
            <person name="Glodek A."/>
            <person name="Zhou L."/>
            <person name="Overbeek R."/>
            <person name="Gocayne J.D."/>
            <person name="Weidman J.F."/>
            <person name="McDonald L.A."/>
            <person name="Utterback T.R."/>
            <person name="Cotton M.D."/>
            <person name="Spriggs T."/>
            <person name="Artiach P."/>
            <person name="Kaine B.P."/>
            <person name="Sykes S.M."/>
            <person name="Sadow P.W."/>
            <person name="D'Andrea K.P."/>
            <person name="Bowman C."/>
            <person name="Fujii C."/>
            <person name="Garland S.A."/>
            <person name="Mason T.M."/>
            <person name="Olsen G.J."/>
            <person name="Fraser C.M."/>
            <person name="Smith H.O."/>
            <person name="Woese C.R."/>
            <person name="Venter J.C."/>
        </authorList>
    </citation>
    <scope>NUCLEOTIDE SEQUENCE [LARGE SCALE GENOMIC DNA]</scope>
    <source>
        <strain>ATCC 49558 / DSM 4304 / JCM 9628 / NBRC 100126 / VC-16</strain>
    </source>
</reference>
<dbReference type="EMBL" id="AE000782">
    <property type="protein sequence ID" value="AAB90167.1"/>
    <property type="molecule type" value="Genomic_DNA"/>
</dbReference>
<dbReference type="PIR" id="E69386">
    <property type="entry name" value="E69386"/>
</dbReference>
<dbReference type="RefSeq" id="WP_010878590.1">
    <property type="nucleotide sequence ID" value="NC_000917.1"/>
</dbReference>
<dbReference type="SMR" id="O29171"/>
<dbReference type="STRING" id="224325.AF_1094"/>
<dbReference type="PaxDb" id="224325-AF_1094"/>
<dbReference type="EnsemblBacteria" id="AAB90167">
    <property type="protein sequence ID" value="AAB90167"/>
    <property type="gene ID" value="AF_1094"/>
</dbReference>
<dbReference type="KEGG" id="afu:AF_1094"/>
<dbReference type="HOGENOM" id="CLU_2712582_0_0_2"/>
<dbReference type="Proteomes" id="UP000002199">
    <property type="component" value="Chromosome"/>
</dbReference>
<accession>O29171</accession>
<proteinExistence type="predicted"/>
<gene>
    <name type="ordered locus">AF_1094</name>
</gene>
<feature type="chain" id="PRO_0000127962" description="Uncharacterized protein AF_1094">
    <location>
        <begin position="1"/>
        <end position="72"/>
    </location>
</feature>